<feature type="chain" id="PRO_0000086939" description="Enhanced filamentous growth protein">
    <location>
        <begin position="1"/>
        <end position="552"/>
    </location>
</feature>
<feature type="domain" description="HTH APSES-type" evidence="1">
    <location>
        <begin position="204"/>
        <end position="310"/>
    </location>
</feature>
<feature type="DNA-binding region" description="H-T-H motif" evidence="1">
    <location>
        <begin position="238"/>
        <end position="259"/>
    </location>
</feature>
<feature type="region of interest" description="Disordered" evidence="2">
    <location>
        <begin position="17"/>
        <end position="48"/>
    </location>
</feature>
<feature type="region of interest" description="Disordered" evidence="2">
    <location>
        <begin position="70"/>
        <end position="93"/>
    </location>
</feature>
<feature type="region of interest" description="Disordered" evidence="2">
    <location>
        <begin position="121"/>
        <end position="180"/>
    </location>
</feature>
<feature type="region of interest" description="Disordered" evidence="2">
    <location>
        <begin position="327"/>
        <end position="384"/>
    </location>
</feature>
<feature type="region of interest" description="Disordered" evidence="2">
    <location>
        <begin position="410"/>
        <end position="447"/>
    </location>
</feature>
<feature type="region of interest" description="Disordered" evidence="2">
    <location>
        <begin position="478"/>
        <end position="552"/>
    </location>
</feature>
<feature type="compositionally biased region" description="Polar residues" evidence="2">
    <location>
        <begin position="121"/>
        <end position="151"/>
    </location>
</feature>
<feature type="compositionally biased region" description="Low complexity" evidence="2">
    <location>
        <begin position="340"/>
        <end position="381"/>
    </location>
</feature>
<feature type="compositionally biased region" description="Polar residues" evidence="2">
    <location>
        <begin position="419"/>
        <end position="434"/>
    </location>
</feature>
<feature type="compositionally biased region" description="Low complexity" evidence="2">
    <location>
        <begin position="435"/>
        <end position="447"/>
    </location>
</feature>
<feature type="compositionally biased region" description="Low complexity" evidence="2">
    <location>
        <begin position="478"/>
        <end position="504"/>
    </location>
</feature>
<feature type="compositionally biased region" description="Polar residues" evidence="2">
    <location>
        <begin position="516"/>
        <end position="546"/>
    </location>
</feature>
<accession>P43064</accession>
<dbReference type="EMBL" id="Z32687">
    <property type="protein sequence ID" value="CAA83640.1"/>
    <property type="molecule type" value="Genomic_DNA"/>
</dbReference>
<dbReference type="PIR" id="S49338">
    <property type="entry name" value="S49338"/>
</dbReference>
<dbReference type="SMR" id="P43064"/>
<dbReference type="VEuPathDB" id="FungiDB:CAWG_02083"/>
<dbReference type="VEuPathDB" id="FungiDB:CR_07890W_A"/>
<dbReference type="PHI-base" id="PHI:87"/>
<dbReference type="GO" id="GO:0005634">
    <property type="term" value="C:nucleus"/>
    <property type="evidence" value="ECO:0007669"/>
    <property type="project" value="UniProtKB-SubCell"/>
</dbReference>
<dbReference type="GO" id="GO:0003700">
    <property type="term" value="F:DNA-binding transcription factor activity"/>
    <property type="evidence" value="ECO:0007669"/>
    <property type="project" value="TreeGrafter"/>
</dbReference>
<dbReference type="GO" id="GO:0043565">
    <property type="term" value="F:sequence-specific DNA binding"/>
    <property type="evidence" value="ECO:0007669"/>
    <property type="project" value="TreeGrafter"/>
</dbReference>
<dbReference type="GO" id="GO:0045944">
    <property type="term" value="P:positive regulation of transcription by RNA polymerase II"/>
    <property type="evidence" value="ECO:0007669"/>
    <property type="project" value="TreeGrafter"/>
</dbReference>
<dbReference type="FunFam" id="3.10.260.10:FF:000009">
    <property type="entry name" value="Enhanced filamentous growth protein 1"/>
    <property type="match status" value="1"/>
</dbReference>
<dbReference type="Gene3D" id="3.10.260.10">
    <property type="entry name" value="Transcription regulator HTH, APSES-type DNA-binding domain"/>
    <property type="match status" value="1"/>
</dbReference>
<dbReference type="InterPro" id="IPR029790">
    <property type="entry name" value="EFG1/Phd1/StuA"/>
</dbReference>
<dbReference type="InterPro" id="IPR036887">
    <property type="entry name" value="HTH_APSES_sf"/>
</dbReference>
<dbReference type="InterPro" id="IPR018004">
    <property type="entry name" value="KilA/APSES_HTH"/>
</dbReference>
<dbReference type="InterPro" id="IPR003163">
    <property type="entry name" value="Tscrpt_reg_HTH_APSES-type"/>
</dbReference>
<dbReference type="PANTHER" id="PTHR47792">
    <property type="entry name" value="PROTEIN SOK2-RELATED"/>
    <property type="match status" value="1"/>
</dbReference>
<dbReference type="PANTHER" id="PTHR47792:SF1">
    <property type="entry name" value="PROTEIN SOK2-RELATED"/>
    <property type="match status" value="1"/>
</dbReference>
<dbReference type="Pfam" id="PF04383">
    <property type="entry name" value="KilA-N"/>
    <property type="match status" value="1"/>
</dbReference>
<dbReference type="SMART" id="SM01252">
    <property type="entry name" value="KilA-N"/>
    <property type="match status" value="1"/>
</dbReference>
<dbReference type="SUPFAM" id="SSF54616">
    <property type="entry name" value="DNA-binding domain of Mlu1-box binding protein MBP1"/>
    <property type="match status" value="1"/>
</dbReference>
<dbReference type="PROSITE" id="PS51299">
    <property type="entry name" value="HTH_APSES"/>
    <property type="match status" value="1"/>
</dbReference>
<keyword id="KW-0238">DNA-binding</keyword>
<keyword id="KW-0539">Nucleus</keyword>
<keyword id="KW-0804">Transcription</keyword>
<keyword id="KW-0805">Transcription regulation</keyword>
<protein>
    <recommendedName>
        <fullName>Enhanced filamentous growth protein</fullName>
    </recommendedName>
</protein>
<evidence type="ECO:0000255" key="1">
    <source>
        <dbReference type="PROSITE-ProRule" id="PRU00630"/>
    </source>
</evidence>
<evidence type="ECO:0000256" key="2">
    <source>
        <dbReference type="SAM" id="MobiDB-lite"/>
    </source>
</evidence>
<evidence type="ECO:0000305" key="3"/>
<gene>
    <name type="primary">EFG1</name>
    <name type="synonym">EFG</name>
</gene>
<name>EFG1_CANAX</name>
<comment type="function">
    <text>Putative transcription factor that stimulates pseudohyphal morphogenesis.</text>
</comment>
<comment type="subcellular location">
    <subcellularLocation>
        <location evidence="1">Nucleus</location>
    </subcellularLocation>
</comment>
<comment type="similarity">
    <text evidence="3">Belongs to the EFG1/PHD1/stuA family.</text>
</comment>
<proteinExistence type="inferred from homology"/>
<reference key="1">
    <citation type="journal article" date="1997" name="EMBO J.">
        <title>Efg1p, an essential regulator of morphogenesis of the human pathogen Candida albicans, is a member of a conserved class of bHLH proteins regulating morphogenetic processes in fungi.</title>
        <authorList>
            <person name="Stoldt V.R."/>
            <person name="Sonneborn A."/>
            <person name="Leuker C.E."/>
            <person name="Ernst J.F."/>
        </authorList>
    </citation>
    <scope>NUCLEOTIDE SEQUENCE [GENOMIC DNA]</scope>
    <source>
        <strain>ATCC 10231 / CBS 6431 / CIP 48.72 / DSM 1386 / NBRC 1594</strain>
    </source>
</reference>
<organism>
    <name type="scientific">Candida albicans</name>
    <name type="common">Yeast</name>
    <dbReference type="NCBI Taxonomy" id="5476"/>
    <lineage>
        <taxon>Eukaryota</taxon>
        <taxon>Fungi</taxon>
        <taxon>Dikarya</taxon>
        <taxon>Ascomycota</taxon>
        <taxon>Saccharomycotina</taxon>
        <taxon>Pichiomycetes</taxon>
        <taxon>Debaryomycetaceae</taxon>
        <taxon>Candida/Lodderomyces clade</taxon>
        <taxon>Candida</taxon>
    </lineage>
</organism>
<sequence>MSTYSIPYYNQMNGNYNNGMPQQTTAANQQAFPQQQQPTTTGNASQQQQQAAATAAAVQQPYNYMFYQQQGQPGQQTGQTAGQQQQQQQQQQQYDYNTYNRYQYPAATSQGNYYQQTIPNQLSQPQPQHYNGSNRNYTSAPSGAPIPSNSTSGPSQQPPLPGQQAVPIPPHVSTMQQPTPVQDTLNASSTSTVGQFQPPGIRPRVTTTMWEDEKTLCYQVDANNVSVVRRADNNMINGTKLLNVAQMTRGRRDGILKSEKVRHVVKIGSMHLKGVWIPFERALAMAQREQIVDMLYPLFVRDIKRVIQTGVTPNAAAATAAAAATATSASAPPPPPPPVAAATTTAATAISKSSSGNGNSISATSGGSNVSGASGAGSTTSPVNTKAATAAGIPQGNYYQTYNQQQYPQQYGQYNAPGKNQNTPASQPGSTTNDQYLQQQQQQQQQMYGYQSNYYQGGAANSSYYPNYYQQQQPNYASSYPYQQQQQKQQQQQPNQQQQSDQQQTSTPSGGAGTRSVHQSPQVQSLTQGSVHPSPQQHQANQSASTVAKEEK</sequence>